<reference key="1">
    <citation type="journal article" date="2008" name="Proc. Natl. Acad. Sci. U.S.A.">
        <title>Nitrogen fixation island and rhizosphere competence traits in the genome of root-associated Pseudomonas stutzeri A1501.</title>
        <authorList>
            <person name="Yan Y."/>
            <person name="Yang J."/>
            <person name="Dou Y."/>
            <person name="Chen M."/>
            <person name="Ping S."/>
            <person name="Peng J."/>
            <person name="Lu W."/>
            <person name="Zhang W."/>
            <person name="Yao Z."/>
            <person name="Li H."/>
            <person name="Liu W."/>
            <person name="He S."/>
            <person name="Geng L."/>
            <person name="Zhang X."/>
            <person name="Yang F."/>
            <person name="Yu H."/>
            <person name="Zhan Y."/>
            <person name="Li D."/>
            <person name="Lin Z."/>
            <person name="Wang Y."/>
            <person name="Elmerich C."/>
            <person name="Lin M."/>
            <person name="Jin Q."/>
        </authorList>
    </citation>
    <scope>NUCLEOTIDE SEQUENCE [LARGE SCALE GENOMIC DNA]</scope>
    <source>
        <strain>A1501</strain>
    </source>
</reference>
<protein>
    <recommendedName>
        <fullName evidence="1">Cytidylate kinase</fullName>
        <shortName evidence="1">CK</shortName>
        <ecNumber evidence="1">2.7.4.25</ecNumber>
    </recommendedName>
    <alternativeName>
        <fullName evidence="1">Cytidine monophosphate kinase</fullName>
        <shortName evidence="1">CMP kinase</shortName>
    </alternativeName>
</protein>
<evidence type="ECO:0000255" key="1">
    <source>
        <dbReference type="HAMAP-Rule" id="MF_00238"/>
    </source>
</evidence>
<feature type="chain" id="PRO_1000048255" description="Cytidylate kinase">
    <location>
        <begin position="1"/>
        <end position="229"/>
    </location>
</feature>
<feature type="binding site" evidence="1">
    <location>
        <begin position="12"/>
        <end position="20"/>
    </location>
    <ligand>
        <name>ATP</name>
        <dbReference type="ChEBI" id="CHEBI:30616"/>
    </ligand>
</feature>
<name>KCY_STUS1</name>
<accession>A4VLZ2</accession>
<comment type="catalytic activity">
    <reaction evidence="1">
        <text>CMP + ATP = CDP + ADP</text>
        <dbReference type="Rhea" id="RHEA:11600"/>
        <dbReference type="ChEBI" id="CHEBI:30616"/>
        <dbReference type="ChEBI" id="CHEBI:58069"/>
        <dbReference type="ChEBI" id="CHEBI:60377"/>
        <dbReference type="ChEBI" id="CHEBI:456216"/>
        <dbReference type="EC" id="2.7.4.25"/>
    </reaction>
</comment>
<comment type="catalytic activity">
    <reaction evidence="1">
        <text>dCMP + ATP = dCDP + ADP</text>
        <dbReference type="Rhea" id="RHEA:25094"/>
        <dbReference type="ChEBI" id="CHEBI:30616"/>
        <dbReference type="ChEBI" id="CHEBI:57566"/>
        <dbReference type="ChEBI" id="CHEBI:58593"/>
        <dbReference type="ChEBI" id="CHEBI:456216"/>
        <dbReference type="EC" id="2.7.4.25"/>
    </reaction>
</comment>
<comment type="subcellular location">
    <subcellularLocation>
        <location evidence="1">Cytoplasm</location>
    </subcellularLocation>
</comment>
<comment type="similarity">
    <text evidence="1">Belongs to the cytidylate kinase family. Type 1 subfamily.</text>
</comment>
<gene>
    <name evidence="1" type="primary">cmk</name>
    <name type="ordered locus">PST_2338</name>
</gene>
<organism>
    <name type="scientific">Stutzerimonas stutzeri (strain A1501)</name>
    <name type="common">Pseudomonas stutzeri</name>
    <dbReference type="NCBI Taxonomy" id="379731"/>
    <lineage>
        <taxon>Bacteria</taxon>
        <taxon>Pseudomonadati</taxon>
        <taxon>Pseudomonadota</taxon>
        <taxon>Gammaproteobacteria</taxon>
        <taxon>Pseudomonadales</taxon>
        <taxon>Pseudomonadaceae</taxon>
        <taxon>Stutzerimonas</taxon>
    </lineage>
</organism>
<sequence length="229" mass="24626">MIKPVPVITIDGPSGSGKGTVAALLAGKLGWNFLDSGALYRLLAFAARNHGVDLTNEEALKVLAEHLDVQFGAARDGHGMVIILEGEDVTEAIRNETVGAGASQVAALPVVRTALLQRQKAFREAPGLVADGRDMGTVVFPDAPLKIFLTASAEERARRRYLQLKARGDDVNLASLLEEIRERDERDTQRAVAPLKPAEDAIQLDSTTLSIEEVLQRILSEVADRDLAG</sequence>
<keyword id="KW-0067">ATP-binding</keyword>
<keyword id="KW-0963">Cytoplasm</keyword>
<keyword id="KW-0418">Kinase</keyword>
<keyword id="KW-0547">Nucleotide-binding</keyword>
<keyword id="KW-1185">Reference proteome</keyword>
<keyword id="KW-0808">Transferase</keyword>
<proteinExistence type="inferred from homology"/>
<dbReference type="EC" id="2.7.4.25" evidence="1"/>
<dbReference type="EMBL" id="CP000304">
    <property type="protein sequence ID" value="ABP79993.1"/>
    <property type="molecule type" value="Genomic_DNA"/>
</dbReference>
<dbReference type="RefSeq" id="WP_011913458.1">
    <property type="nucleotide sequence ID" value="NC_009434.1"/>
</dbReference>
<dbReference type="SMR" id="A4VLZ2"/>
<dbReference type="GeneID" id="66821185"/>
<dbReference type="KEGG" id="psa:PST_2338"/>
<dbReference type="eggNOG" id="COG0283">
    <property type="taxonomic scope" value="Bacteria"/>
</dbReference>
<dbReference type="HOGENOM" id="CLU_079959_0_2_6"/>
<dbReference type="Proteomes" id="UP000000233">
    <property type="component" value="Chromosome"/>
</dbReference>
<dbReference type="GO" id="GO:0005829">
    <property type="term" value="C:cytosol"/>
    <property type="evidence" value="ECO:0007669"/>
    <property type="project" value="TreeGrafter"/>
</dbReference>
<dbReference type="GO" id="GO:0005524">
    <property type="term" value="F:ATP binding"/>
    <property type="evidence" value="ECO:0007669"/>
    <property type="project" value="UniProtKB-UniRule"/>
</dbReference>
<dbReference type="GO" id="GO:0036430">
    <property type="term" value="F:CMP kinase activity"/>
    <property type="evidence" value="ECO:0007669"/>
    <property type="project" value="RHEA"/>
</dbReference>
<dbReference type="GO" id="GO:0036431">
    <property type="term" value="F:dCMP kinase activity"/>
    <property type="evidence" value="ECO:0007669"/>
    <property type="project" value="RHEA"/>
</dbReference>
<dbReference type="GO" id="GO:0015949">
    <property type="term" value="P:nucleobase-containing small molecule interconversion"/>
    <property type="evidence" value="ECO:0007669"/>
    <property type="project" value="TreeGrafter"/>
</dbReference>
<dbReference type="GO" id="GO:0006220">
    <property type="term" value="P:pyrimidine nucleotide metabolic process"/>
    <property type="evidence" value="ECO:0007669"/>
    <property type="project" value="UniProtKB-UniRule"/>
</dbReference>
<dbReference type="CDD" id="cd02020">
    <property type="entry name" value="CMPK"/>
    <property type="match status" value="1"/>
</dbReference>
<dbReference type="FunFam" id="3.40.50.300:FF:000262">
    <property type="entry name" value="Cytidylate kinase"/>
    <property type="match status" value="1"/>
</dbReference>
<dbReference type="Gene3D" id="3.40.50.300">
    <property type="entry name" value="P-loop containing nucleotide triphosphate hydrolases"/>
    <property type="match status" value="1"/>
</dbReference>
<dbReference type="HAMAP" id="MF_00238">
    <property type="entry name" value="Cytidyl_kinase_type1"/>
    <property type="match status" value="1"/>
</dbReference>
<dbReference type="InterPro" id="IPR003136">
    <property type="entry name" value="Cytidylate_kin"/>
</dbReference>
<dbReference type="InterPro" id="IPR011994">
    <property type="entry name" value="Cytidylate_kinase_dom"/>
</dbReference>
<dbReference type="InterPro" id="IPR027417">
    <property type="entry name" value="P-loop_NTPase"/>
</dbReference>
<dbReference type="NCBIfam" id="TIGR00017">
    <property type="entry name" value="cmk"/>
    <property type="match status" value="1"/>
</dbReference>
<dbReference type="PANTHER" id="PTHR21299:SF2">
    <property type="entry name" value="CYTIDYLATE KINASE"/>
    <property type="match status" value="1"/>
</dbReference>
<dbReference type="PANTHER" id="PTHR21299">
    <property type="entry name" value="CYTIDYLATE KINASE/PANTOATE-BETA-ALANINE LIGASE"/>
    <property type="match status" value="1"/>
</dbReference>
<dbReference type="Pfam" id="PF02224">
    <property type="entry name" value="Cytidylate_kin"/>
    <property type="match status" value="1"/>
</dbReference>
<dbReference type="SUPFAM" id="SSF52540">
    <property type="entry name" value="P-loop containing nucleoside triphosphate hydrolases"/>
    <property type="match status" value="1"/>
</dbReference>